<accession>B3LYC0</accession>
<reference key="1">
    <citation type="journal article" date="2007" name="Nature">
        <title>Evolution of genes and genomes on the Drosophila phylogeny.</title>
        <authorList>
            <consortium name="Drosophila 12 genomes consortium"/>
        </authorList>
    </citation>
    <scope>NUCLEOTIDE SEQUENCE [LARGE SCALE GENOMIC DNA]</scope>
    <source>
        <strain>Tucson 14024-0371.13</strain>
    </source>
</reference>
<proteinExistence type="inferred from homology"/>
<gene>
    <name type="ORF">GF17327</name>
</gene>
<dbReference type="EC" id="2.3.2.-"/>
<dbReference type="EMBL" id="CH902617">
    <property type="protein sequence ID" value="EDV41783.1"/>
    <property type="molecule type" value="Genomic_DNA"/>
</dbReference>
<dbReference type="RefSeq" id="XP_001953200.1">
    <property type="nucleotide sequence ID" value="XM_001953165.2"/>
</dbReference>
<dbReference type="SMR" id="B3LYC0"/>
<dbReference type="FunCoup" id="B3LYC0">
    <property type="interactions" value="2510"/>
</dbReference>
<dbReference type="STRING" id="7217.B3LYC0"/>
<dbReference type="EnsemblMetazoa" id="FBtr0122027">
    <property type="protein sequence ID" value="FBpp0120519"/>
    <property type="gene ID" value="FBgn0094345"/>
</dbReference>
<dbReference type="EnsemblMetazoa" id="XM_032450011.2">
    <property type="protein sequence ID" value="XP_032305902.1"/>
    <property type="gene ID" value="LOC6500112"/>
</dbReference>
<dbReference type="eggNOG" id="KOG2235">
    <property type="taxonomic scope" value="Eukaryota"/>
</dbReference>
<dbReference type="HOGENOM" id="CLU_012417_1_1_1"/>
<dbReference type="InParanoid" id="B3LYC0"/>
<dbReference type="OMA" id="CILHASG"/>
<dbReference type="OrthoDB" id="10258297at2759"/>
<dbReference type="PhylomeDB" id="B3LYC0"/>
<dbReference type="Proteomes" id="UP000007801">
    <property type="component" value="Unassembled WGS sequence"/>
</dbReference>
<dbReference type="GO" id="GO:0005789">
    <property type="term" value="C:endoplasmic reticulum membrane"/>
    <property type="evidence" value="ECO:0007669"/>
    <property type="project" value="TreeGrafter"/>
</dbReference>
<dbReference type="GO" id="GO:0061666">
    <property type="term" value="F:UFM1 ligase activity"/>
    <property type="evidence" value="ECO:0007669"/>
    <property type="project" value="EnsemblMetazoa"/>
</dbReference>
<dbReference type="GO" id="GO:1990592">
    <property type="term" value="P:protein K69-linked ufmylation"/>
    <property type="evidence" value="ECO:0007669"/>
    <property type="project" value="TreeGrafter"/>
</dbReference>
<dbReference type="GO" id="GO:0032434">
    <property type="term" value="P:regulation of proteasomal ubiquitin-dependent protein catabolic process"/>
    <property type="evidence" value="ECO:0007669"/>
    <property type="project" value="TreeGrafter"/>
</dbReference>
<dbReference type="GO" id="GO:0034976">
    <property type="term" value="P:response to endoplasmic reticulum stress"/>
    <property type="evidence" value="ECO:0007669"/>
    <property type="project" value="TreeGrafter"/>
</dbReference>
<dbReference type="InterPro" id="IPR018611">
    <property type="entry name" value="Ufl1"/>
</dbReference>
<dbReference type="InterPro" id="IPR056761">
    <property type="entry name" value="Ufl1-like_C"/>
</dbReference>
<dbReference type="InterPro" id="IPR056580">
    <property type="entry name" value="Ufl1_dom"/>
</dbReference>
<dbReference type="InterPro" id="IPR056579">
    <property type="entry name" value="Ufl1_N"/>
</dbReference>
<dbReference type="PANTHER" id="PTHR31057">
    <property type="entry name" value="E3 UFM1-PROTEIN LIGASE 1"/>
    <property type="match status" value="1"/>
</dbReference>
<dbReference type="PANTHER" id="PTHR31057:SF0">
    <property type="entry name" value="E3 UFM1-PROTEIN LIGASE 1"/>
    <property type="match status" value="1"/>
</dbReference>
<dbReference type="Pfam" id="PF09743">
    <property type="entry name" value="E3_UFM1_ligase"/>
    <property type="match status" value="1"/>
</dbReference>
<dbReference type="Pfam" id="PF23659">
    <property type="entry name" value="UFL1"/>
    <property type="match status" value="1"/>
</dbReference>
<dbReference type="Pfam" id="PF25041">
    <property type="entry name" value="UFL1_C"/>
    <property type="match status" value="1"/>
</dbReference>
<keyword id="KW-1185">Reference proteome</keyword>
<keyword id="KW-0808">Transferase</keyword>
<keyword id="KW-0833">Ubl conjugation pathway</keyword>
<feature type="chain" id="PRO_0000391879" description="E3 UFM1-protein ligase 1 homolog">
    <location>
        <begin position="1"/>
        <end position="784"/>
    </location>
</feature>
<feature type="region of interest" description="Disordered" evidence="2">
    <location>
        <begin position="401"/>
        <end position="481"/>
    </location>
</feature>
<organism>
    <name type="scientific">Drosophila ananassae</name>
    <name type="common">Fruit fly</name>
    <dbReference type="NCBI Taxonomy" id="7217"/>
    <lineage>
        <taxon>Eukaryota</taxon>
        <taxon>Metazoa</taxon>
        <taxon>Ecdysozoa</taxon>
        <taxon>Arthropoda</taxon>
        <taxon>Hexapoda</taxon>
        <taxon>Insecta</taxon>
        <taxon>Pterygota</taxon>
        <taxon>Neoptera</taxon>
        <taxon>Endopterygota</taxon>
        <taxon>Diptera</taxon>
        <taxon>Brachycera</taxon>
        <taxon>Muscomorpha</taxon>
        <taxon>Ephydroidea</taxon>
        <taxon>Drosophilidae</taxon>
        <taxon>Drosophila</taxon>
        <taxon>Sophophora</taxon>
    </lineage>
</organism>
<sequence length="784" mass="87122">MGSDWDEIKRLAADFQKAQLTSTLQKLSERNCVEIVTLLLEKQLLDVVFTVDGKEYITPDHLEREIQDELYVNGGRANLVEVSKALNVDLSRVVSLAERIAAENPSIHLELGQLIDEEYITHIAQEINEKLALRGEISISELASQFDLPSEFLQHKVVEKHLGKIIKGRQDTTNPRVFFTQAYIQRCKAKIRGALAAITRPTNVAVILQQIGVQEKIFHSLLDEIAPAGQVTSKMANAQYVPHVYAKTQSDWVSSFYKQNSFLEYDAIQKLGISDPKTYIRKQFPSEEFLFLKRVALGARLVELTVVTALNECSATKQYLDLSSILPSNLSEEDIEEVFAAIMAQKQSNPSNFVYLDSIVFSQPYLQQLVQPCQALAETQAKAAIDSGIYQQHIVEKTLAQKGNSSAQDLEDDGKVDKRDERRKKAASGKAGGGAQGRETKTKSTKKHARGRAAAAQNDSDDDEDVHQNTKGGGGGGNKKTVKPLELVKTADIVKLITATLEEEGLEHLAKSIASLYTSQFNQTALARAQELFEATPQTNRRQTHAAIQDRINTLLVDIRLYEKGLKLLPQDTQTQLVKYLLKSLGNDICNELSLYVAAECNLTVKNSNLNVDQRNKLAQECDAQYRSALLEQNKALNKSIDEFELATEAVLKACSMIIKKVDKKKDRLLIADHKKKLQEQLLECNDPALLLHLAALILFTTISGCILHASGKFVSAILQHIRGSLSDPQNALLLRYHDLVLQVLQSAADSSESKIAHEQLQAMQTEVIDLAQNYSRASVSKAD</sequence>
<name>UFL1_DROAN</name>
<comment type="function">
    <text evidence="1">E3 UFM1-protein ligase that mediates ufmylation of target proteins.</text>
</comment>
<comment type="similarity">
    <text evidence="3">Belongs to the UFL1 family.</text>
</comment>
<evidence type="ECO:0000250" key="1">
    <source>
        <dbReference type="UniProtKB" id="O94874"/>
    </source>
</evidence>
<evidence type="ECO:0000256" key="2">
    <source>
        <dbReference type="SAM" id="MobiDB-lite"/>
    </source>
</evidence>
<evidence type="ECO:0000305" key="3"/>
<protein>
    <recommendedName>
        <fullName>E3 UFM1-protein ligase 1 homolog</fullName>
        <ecNumber>2.3.2.-</ecNumber>
    </recommendedName>
    <alternativeName>
        <fullName evidence="3">E3 UFM1-protein transferase 1 homolog</fullName>
    </alternativeName>
</protein>